<proteinExistence type="inferred from homology"/>
<protein>
    <recommendedName>
        <fullName evidence="1">N-acetylmannosamine kinase</fullName>
        <ecNumber evidence="1">2.7.1.60</ecNumber>
    </recommendedName>
    <alternativeName>
        <fullName evidence="1">ManNAc kinase</fullName>
    </alternativeName>
    <alternativeName>
        <fullName evidence="1">N-acetyl-D-mannosamine kinase</fullName>
    </alternativeName>
</protein>
<keyword id="KW-0067">ATP-binding</keyword>
<keyword id="KW-0119">Carbohydrate metabolism</keyword>
<keyword id="KW-0418">Kinase</keyword>
<keyword id="KW-0479">Metal-binding</keyword>
<keyword id="KW-0547">Nucleotide-binding</keyword>
<keyword id="KW-0808">Transferase</keyword>
<keyword id="KW-0862">Zinc</keyword>
<feature type="chain" id="PRO_1000139699" description="N-acetylmannosamine kinase">
    <location>
        <begin position="1"/>
        <end position="290"/>
    </location>
</feature>
<feature type="binding site" evidence="1">
    <location>
        <begin position="6"/>
        <end position="13"/>
    </location>
    <ligand>
        <name>ATP</name>
        <dbReference type="ChEBI" id="CHEBI:30616"/>
    </ligand>
</feature>
<feature type="binding site" evidence="1">
    <location>
        <begin position="132"/>
        <end position="139"/>
    </location>
    <ligand>
        <name>ATP</name>
        <dbReference type="ChEBI" id="CHEBI:30616"/>
    </ligand>
</feature>
<feature type="binding site" evidence="1">
    <location>
        <position position="156"/>
    </location>
    <ligand>
        <name>Zn(2+)</name>
        <dbReference type="ChEBI" id="CHEBI:29105"/>
    </ligand>
</feature>
<feature type="binding site" evidence="1">
    <location>
        <position position="166"/>
    </location>
    <ligand>
        <name>Zn(2+)</name>
        <dbReference type="ChEBI" id="CHEBI:29105"/>
    </ligand>
</feature>
<feature type="binding site" evidence="1">
    <location>
        <position position="168"/>
    </location>
    <ligand>
        <name>Zn(2+)</name>
        <dbReference type="ChEBI" id="CHEBI:29105"/>
    </ligand>
</feature>
<feature type="binding site" evidence="1">
    <location>
        <position position="173"/>
    </location>
    <ligand>
        <name>Zn(2+)</name>
        <dbReference type="ChEBI" id="CHEBI:29105"/>
    </ligand>
</feature>
<comment type="function">
    <text evidence="1">Catalyzes the phosphorylation of N-acetylmannosamine (ManNAc) to ManNAc-6-P.</text>
</comment>
<comment type="catalytic activity">
    <reaction evidence="1">
        <text>an N-acyl-D-mannosamine + ATP = an N-acyl-D-mannosamine 6-phosphate + ADP + H(+)</text>
        <dbReference type="Rhea" id="RHEA:23832"/>
        <dbReference type="ChEBI" id="CHEBI:15378"/>
        <dbReference type="ChEBI" id="CHEBI:16062"/>
        <dbReference type="ChEBI" id="CHEBI:30616"/>
        <dbReference type="ChEBI" id="CHEBI:57666"/>
        <dbReference type="ChEBI" id="CHEBI:456216"/>
        <dbReference type="EC" id="2.7.1.60"/>
    </reaction>
</comment>
<comment type="pathway">
    <text evidence="1">Amino-sugar metabolism; N-acetylneuraminate degradation; D-fructose 6-phosphate from N-acetylneuraminate: step 2/5.</text>
</comment>
<comment type="subunit">
    <text evidence="1">Homodimer.</text>
</comment>
<comment type="similarity">
    <text evidence="1">Belongs to the ROK (NagC/XylR) family. NanK subfamily.</text>
</comment>
<sequence length="290" mass="29715">MGKGLALDIGGTKIAAAVVTESGMLIGRQQIATPRGGAGQLAAALETLIAPYRHQVDFIAVASTGIISGGRLTALNPANLGGLADFPLYDCIRSISDLPCVLLNDGQAAAWAEYQALGDKNDNMMFVTVSTGVGGGIILNKKLLVGQRGLAGHIGHTLSDPHGVLCGCGRRGCVESVASGTAIGAETLGWKQPVSAATVFDMAQQGDAQAGKVINRSAAAIAQMLADMKMALDLEVVILGGSVGLAVGYLERVVAAQKTLPGIYRVPVQEAHHRQDSGLLGAALWARASL</sequence>
<organism>
    <name type="scientific">Yersinia pseudotuberculosis serotype O:3 (strain YPIII)</name>
    <dbReference type="NCBI Taxonomy" id="502800"/>
    <lineage>
        <taxon>Bacteria</taxon>
        <taxon>Pseudomonadati</taxon>
        <taxon>Pseudomonadota</taxon>
        <taxon>Gammaproteobacteria</taxon>
        <taxon>Enterobacterales</taxon>
        <taxon>Yersiniaceae</taxon>
        <taxon>Yersinia</taxon>
    </lineage>
</organism>
<gene>
    <name evidence="1" type="primary">nanK</name>
    <name type="ordered locus">YPK_1404</name>
</gene>
<accession>B1JFW2</accession>
<name>NANK_YERPY</name>
<reference key="1">
    <citation type="submission" date="2008-02" db="EMBL/GenBank/DDBJ databases">
        <title>Complete sequence of Yersinia pseudotuberculosis YPIII.</title>
        <authorList>
            <consortium name="US DOE Joint Genome Institute"/>
            <person name="Copeland A."/>
            <person name="Lucas S."/>
            <person name="Lapidus A."/>
            <person name="Glavina del Rio T."/>
            <person name="Dalin E."/>
            <person name="Tice H."/>
            <person name="Bruce D."/>
            <person name="Goodwin L."/>
            <person name="Pitluck S."/>
            <person name="Munk A.C."/>
            <person name="Brettin T."/>
            <person name="Detter J.C."/>
            <person name="Han C."/>
            <person name="Tapia R."/>
            <person name="Schmutz J."/>
            <person name="Larimer F."/>
            <person name="Land M."/>
            <person name="Hauser L."/>
            <person name="Challacombe J.F."/>
            <person name="Green L."/>
            <person name="Lindler L.E."/>
            <person name="Nikolich M.P."/>
            <person name="Richardson P."/>
        </authorList>
    </citation>
    <scope>NUCLEOTIDE SEQUENCE [LARGE SCALE GENOMIC DNA]</scope>
    <source>
        <strain>YPIII</strain>
    </source>
</reference>
<dbReference type="EC" id="2.7.1.60" evidence="1"/>
<dbReference type="EMBL" id="CP000950">
    <property type="protein sequence ID" value="ACA67698.1"/>
    <property type="molecule type" value="Genomic_DNA"/>
</dbReference>
<dbReference type="RefSeq" id="WP_012303884.1">
    <property type="nucleotide sequence ID" value="NZ_CP009792.1"/>
</dbReference>
<dbReference type="SMR" id="B1JFW2"/>
<dbReference type="KEGG" id="ypy:YPK_1404"/>
<dbReference type="PATRIC" id="fig|502800.11.peg.2041"/>
<dbReference type="UniPathway" id="UPA00629">
    <property type="reaction ID" value="UER00681"/>
</dbReference>
<dbReference type="GO" id="GO:0005524">
    <property type="term" value="F:ATP binding"/>
    <property type="evidence" value="ECO:0007669"/>
    <property type="project" value="UniProtKB-UniRule"/>
</dbReference>
<dbReference type="GO" id="GO:0009384">
    <property type="term" value="F:N-acylmannosamine kinase activity"/>
    <property type="evidence" value="ECO:0007669"/>
    <property type="project" value="UniProtKB-UniRule"/>
</dbReference>
<dbReference type="GO" id="GO:0008270">
    <property type="term" value="F:zinc ion binding"/>
    <property type="evidence" value="ECO:0007669"/>
    <property type="project" value="UniProtKB-UniRule"/>
</dbReference>
<dbReference type="GO" id="GO:0019262">
    <property type="term" value="P:N-acetylneuraminate catabolic process"/>
    <property type="evidence" value="ECO:0007669"/>
    <property type="project" value="UniProtKB-UniRule"/>
</dbReference>
<dbReference type="CDD" id="cd24069">
    <property type="entry name" value="ASKHA_NBD_ROK_EcNanK-like"/>
    <property type="match status" value="1"/>
</dbReference>
<dbReference type="FunFam" id="3.30.420.40:FF:000063">
    <property type="entry name" value="N-acetylmannosamine kinase"/>
    <property type="match status" value="1"/>
</dbReference>
<dbReference type="Gene3D" id="3.30.420.40">
    <property type="match status" value="2"/>
</dbReference>
<dbReference type="HAMAP" id="MF_01234">
    <property type="entry name" value="ManNAc_kinase"/>
    <property type="match status" value="1"/>
</dbReference>
<dbReference type="InterPro" id="IPR043129">
    <property type="entry name" value="ATPase_NBD"/>
</dbReference>
<dbReference type="InterPro" id="IPR023945">
    <property type="entry name" value="ManNAc_kinase_bac"/>
</dbReference>
<dbReference type="InterPro" id="IPR000600">
    <property type="entry name" value="ROK"/>
</dbReference>
<dbReference type="InterPro" id="IPR049874">
    <property type="entry name" value="ROK_cs"/>
</dbReference>
<dbReference type="NCBIfam" id="NF003461">
    <property type="entry name" value="PRK05082.1"/>
    <property type="match status" value="1"/>
</dbReference>
<dbReference type="PANTHER" id="PTHR18964:SF169">
    <property type="entry name" value="N-ACETYLMANNOSAMINE KINASE"/>
    <property type="match status" value="1"/>
</dbReference>
<dbReference type="PANTHER" id="PTHR18964">
    <property type="entry name" value="ROK (REPRESSOR, ORF, KINASE) FAMILY"/>
    <property type="match status" value="1"/>
</dbReference>
<dbReference type="Pfam" id="PF00480">
    <property type="entry name" value="ROK"/>
    <property type="match status" value="1"/>
</dbReference>
<dbReference type="SUPFAM" id="SSF53067">
    <property type="entry name" value="Actin-like ATPase domain"/>
    <property type="match status" value="1"/>
</dbReference>
<dbReference type="PROSITE" id="PS01125">
    <property type="entry name" value="ROK"/>
    <property type="match status" value="1"/>
</dbReference>
<evidence type="ECO:0000255" key="1">
    <source>
        <dbReference type="HAMAP-Rule" id="MF_01234"/>
    </source>
</evidence>